<protein>
    <recommendedName>
        <fullName>Transmembrane protein 128</fullName>
    </recommendedName>
</protein>
<evidence type="ECO:0000255" key="1"/>
<evidence type="ECO:0000269" key="2">
    <source>
    </source>
</evidence>
<evidence type="ECO:0000269" key="3">
    <source>
    </source>
</evidence>
<evidence type="ECO:0000303" key="4">
    <source>
    </source>
</evidence>
<evidence type="ECO:0000305" key="5"/>
<keyword id="KW-0025">Alternative splicing</keyword>
<keyword id="KW-0472">Membrane</keyword>
<keyword id="KW-1267">Proteomics identification</keyword>
<keyword id="KW-1185">Reference proteome</keyword>
<keyword id="KW-0812">Transmembrane</keyword>
<keyword id="KW-1133">Transmembrane helix</keyword>
<sequence length="165" mass="18822">MDSSRARQQLRRRFLLLPDAEAQLDREGDAGPETSTAVEKKEKPLPRLNIHSGFWILASIVVTYYVDFFKTLKENFHTSSWFLCGSALLLVSLSIAFYCIVYLEWYCGIGEYDVKYPALIPITTASFIAAGICFNIALWHVWSFFTPLLLFTQFMGVVMFITLLG</sequence>
<feature type="chain" id="PRO_0000254556" description="Transmembrane protein 128">
    <location>
        <begin position="1"/>
        <end position="165"/>
    </location>
</feature>
<feature type="transmembrane region" description="Helical" evidence="1">
    <location>
        <begin position="49"/>
        <end position="69"/>
    </location>
</feature>
<feature type="transmembrane region" description="Helical" evidence="1">
    <location>
        <begin position="81"/>
        <end position="101"/>
    </location>
</feature>
<feature type="transmembrane region" description="Helical" evidence="1">
    <location>
        <begin position="119"/>
        <end position="139"/>
    </location>
</feature>
<feature type="transmembrane region" description="Helical" evidence="1">
    <location>
        <begin position="144"/>
        <end position="164"/>
    </location>
</feature>
<feature type="splice variant" id="VSP_021229" description="In isoform 2." evidence="4">
    <original>MDSSRARQQLRRRFLLLPDAEAQLDREGDAGP</original>
    <variation>MPPFGYKT</variation>
    <location>
        <begin position="1"/>
        <end position="32"/>
    </location>
</feature>
<feature type="sequence variant" id="VAR_080190" description="In dbSNP:rs6854167." evidence="2 3">
    <original>L</original>
    <variation>I</variation>
    <location>
        <position position="16"/>
    </location>
</feature>
<feature type="sequence conflict" description="In Ref. 2; CAI45928." evidence="5" ref="2">
    <original>K</original>
    <variation>E</variation>
    <location>
        <position position="43"/>
    </location>
</feature>
<dbReference type="EMBL" id="AK295248">
    <property type="protein sequence ID" value="BAG58239.1"/>
    <property type="molecule type" value="mRNA"/>
</dbReference>
<dbReference type="EMBL" id="CR933611">
    <property type="protein sequence ID" value="CAI45928.1"/>
    <property type="molecule type" value="mRNA"/>
</dbReference>
<dbReference type="EMBL" id="AC011744">
    <property type="status" value="NOT_ANNOTATED_CDS"/>
    <property type="molecule type" value="Genomic_DNA"/>
</dbReference>
<dbReference type="EMBL" id="CH471131">
    <property type="protein sequence ID" value="EAW82440.1"/>
    <property type="molecule type" value="Genomic_DNA"/>
</dbReference>
<dbReference type="EMBL" id="CH471131">
    <property type="protein sequence ID" value="EAW82441.1"/>
    <property type="molecule type" value="Genomic_DNA"/>
</dbReference>
<dbReference type="EMBL" id="CH471131">
    <property type="protein sequence ID" value="EAW82442.1"/>
    <property type="molecule type" value="Genomic_DNA"/>
</dbReference>
<dbReference type="EMBL" id="CH471131">
    <property type="protein sequence ID" value="EAW82443.1"/>
    <property type="molecule type" value="Genomic_DNA"/>
</dbReference>
<dbReference type="EMBL" id="CH471131">
    <property type="protein sequence ID" value="EAW82444.1"/>
    <property type="molecule type" value="Genomic_DNA"/>
</dbReference>
<dbReference type="EMBL" id="BC007729">
    <property type="protein sequence ID" value="AAH07729.1"/>
    <property type="molecule type" value="mRNA"/>
</dbReference>
<dbReference type="EMBL" id="BC091482">
    <property type="protein sequence ID" value="AAH91482.1"/>
    <property type="molecule type" value="mRNA"/>
</dbReference>
<dbReference type="CCDS" id="CCDS3373.1">
    <molecule id="Q5BJH2-2"/>
</dbReference>
<dbReference type="CCDS" id="CCDS75099.1">
    <molecule id="Q5BJH2-1"/>
</dbReference>
<dbReference type="RefSeq" id="NP_001284480.1">
    <molecule id="Q5BJH2-1"/>
    <property type="nucleotide sequence ID" value="NM_001297551.2"/>
</dbReference>
<dbReference type="RefSeq" id="NP_001284481.1">
    <molecule id="Q5BJH2-1"/>
    <property type="nucleotide sequence ID" value="NM_001297552.2"/>
</dbReference>
<dbReference type="RefSeq" id="NP_116316.1">
    <molecule id="Q5BJH2-2"/>
    <property type="nucleotide sequence ID" value="NM_032927.4"/>
</dbReference>
<dbReference type="RefSeq" id="XP_005248091.1">
    <molecule id="Q5BJH2-1"/>
    <property type="nucleotide sequence ID" value="XM_005248034.4"/>
</dbReference>
<dbReference type="RefSeq" id="XP_054207105.1">
    <molecule id="Q5BJH2-1"/>
    <property type="nucleotide sequence ID" value="XM_054351130.1"/>
</dbReference>
<dbReference type="BioGRID" id="124428">
    <property type="interactions" value="93"/>
</dbReference>
<dbReference type="FunCoup" id="Q5BJH2">
    <property type="interactions" value="134"/>
</dbReference>
<dbReference type="IntAct" id="Q5BJH2">
    <property type="interactions" value="73"/>
</dbReference>
<dbReference type="STRING" id="9606.ENSP00000372201"/>
<dbReference type="TCDB" id="9.B.202.1.1">
    <property type="family name" value="the 4 tms tmem128 (tmem128) family"/>
</dbReference>
<dbReference type="iPTMnet" id="Q5BJH2"/>
<dbReference type="SwissPalm" id="Q5BJH2"/>
<dbReference type="BioMuta" id="TMEM128"/>
<dbReference type="DMDM" id="74736022"/>
<dbReference type="jPOST" id="Q5BJH2"/>
<dbReference type="MassIVE" id="Q5BJH2"/>
<dbReference type="PaxDb" id="9606-ENSP00000372201"/>
<dbReference type="PeptideAtlas" id="Q5BJH2"/>
<dbReference type="ProteomicsDB" id="12769"/>
<dbReference type="ProteomicsDB" id="62691">
    <molecule id="Q5BJH2-1"/>
</dbReference>
<dbReference type="Pumba" id="Q5BJH2"/>
<dbReference type="Antibodypedia" id="51629">
    <property type="antibodies" value="10 antibodies from 7 providers"/>
</dbReference>
<dbReference type="DNASU" id="85013"/>
<dbReference type="Ensembl" id="ENST00000254742.6">
    <molecule id="Q5BJH2-2"/>
    <property type="protein sequence ID" value="ENSP00000254742.2"/>
    <property type="gene ID" value="ENSG00000132406.12"/>
</dbReference>
<dbReference type="Ensembl" id="ENST00000382753.5">
    <molecule id="Q5BJH2-1"/>
    <property type="protein sequence ID" value="ENSP00000372201.4"/>
    <property type="gene ID" value="ENSG00000132406.12"/>
</dbReference>
<dbReference type="GeneID" id="85013"/>
<dbReference type="KEGG" id="hsa:85013"/>
<dbReference type="MANE-Select" id="ENST00000382753.5">
    <property type="protein sequence ID" value="ENSP00000372201.4"/>
    <property type="RefSeq nucleotide sequence ID" value="NM_001297551.2"/>
    <property type="RefSeq protein sequence ID" value="NP_001284480.1"/>
</dbReference>
<dbReference type="UCSC" id="uc003ghq.2">
    <molecule id="Q5BJH2-1"/>
    <property type="organism name" value="human"/>
</dbReference>
<dbReference type="UCSC" id="uc003ghr.2">
    <property type="organism name" value="human"/>
</dbReference>
<dbReference type="AGR" id="HGNC:28201"/>
<dbReference type="CTD" id="85013"/>
<dbReference type="GeneCards" id="TMEM128"/>
<dbReference type="HGNC" id="HGNC:28201">
    <property type="gene designation" value="TMEM128"/>
</dbReference>
<dbReference type="HPA" id="ENSG00000132406">
    <property type="expression patterns" value="Low tissue specificity"/>
</dbReference>
<dbReference type="neXtProt" id="NX_Q5BJH2"/>
<dbReference type="OpenTargets" id="ENSG00000132406"/>
<dbReference type="PharmGKB" id="PA143485648"/>
<dbReference type="VEuPathDB" id="HostDB:ENSG00000132406"/>
<dbReference type="eggNOG" id="ENOG502RZ1U">
    <property type="taxonomic scope" value="Eukaryota"/>
</dbReference>
<dbReference type="GeneTree" id="ENSGT00390000012901"/>
<dbReference type="HOGENOM" id="CLU_117906_1_0_1"/>
<dbReference type="InParanoid" id="Q5BJH2"/>
<dbReference type="OMA" id="KESGWFV"/>
<dbReference type="OrthoDB" id="58903at2759"/>
<dbReference type="PAN-GO" id="Q5BJH2">
    <property type="GO annotations" value="0 GO annotations based on evolutionary models"/>
</dbReference>
<dbReference type="PhylomeDB" id="Q5BJH2"/>
<dbReference type="TreeFam" id="TF328406"/>
<dbReference type="PathwayCommons" id="Q5BJH2"/>
<dbReference type="SignaLink" id="Q5BJH2"/>
<dbReference type="BioGRID-ORCS" id="85013">
    <property type="hits" value="7 hits in 1127 CRISPR screens"/>
</dbReference>
<dbReference type="ChiTaRS" id="TMEM128">
    <property type="organism name" value="human"/>
</dbReference>
<dbReference type="GenomeRNAi" id="85013"/>
<dbReference type="Pharos" id="Q5BJH2">
    <property type="development level" value="Tdark"/>
</dbReference>
<dbReference type="PRO" id="PR:Q5BJH2"/>
<dbReference type="Proteomes" id="UP000005640">
    <property type="component" value="Chromosome 4"/>
</dbReference>
<dbReference type="RNAct" id="Q5BJH2">
    <property type="molecule type" value="protein"/>
</dbReference>
<dbReference type="Bgee" id="ENSG00000132406">
    <property type="expression patterns" value="Expressed in oocyte and 190 other cell types or tissues"/>
</dbReference>
<dbReference type="GO" id="GO:0016020">
    <property type="term" value="C:membrane"/>
    <property type="evidence" value="ECO:0007669"/>
    <property type="project" value="UniProtKB-SubCell"/>
</dbReference>
<dbReference type="InterPro" id="IPR033579">
    <property type="entry name" value="TMEM128"/>
</dbReference>
<dbReference type="PANTHER" id="PTHR31134">
    <property type="entry name" value="TRANSMEMBRANE PROTEIN 128"/>
    <property type="match status" value="1"/>
</dbReference>
<dbReference type="PANTHER" id="PTHR31134:SF1">
    <property type="entry name" value="TRANSMEMBRANE PROTEIN 128"/>
    <property type="match status" value="1"/>
</dbReference>
<dbReference type="Pfam" id="PF20479">
    <property type="entry name" value="TMEM128"/>
    <property type="match status" value="1"/>
</dbReference>
<proteinExistence type="evidence at protein level"/>
<comment type="interaction">
    <interactant intactId="EBI-10243515">
        <id>Q5BJH2</id>
    </interactant>
    <interactant intactId="EBI-747430">
        <id>Q9BXK5</id>
        <label>BCL2L13</label>
    </interactant>
    <organismsDiffer>false</organismsDiffer>
    <experiments>3</experiments>
</comment>
<comment type="interaction">
    <interactant intactId="EBI-10694905">
        <id>Q5BJH2-2</id>
    </interactant>
    <interactant intactId="EBI-13059134">
        <id>Q13520</id>
        <label>AQP6</label>
    </interactant>
    <organismsDiffer>false</organismsDiffer>
    <experiments>3</experiments>
</comment>
<comment type="interaction">
    <interactant intactId="EBI-10694905">
        <id>Q5BJH2-2</id>
    </interactant>
    <interactant intactId="EBI-11343438">
        <id>Q3SXY8</id>
        <label>ARL13B</label>
    </interactant>
    <organismsDiffer>false</organismsDiffer>
    <experiments>3</experiments>
</comment>
<comment type="interaction">
    <interactant intactId="EBI-10694905">
        <id>Q5BJH2-2</id>
    </interactant>
    <interactant intactId="EBI-19947314">
        <id>Q8NFU1</id>
        <label>BEST2</label>
    </interactant>
    <organismsDiffer>false</organismsDiffer>
    <experiments>3</experiments>
</comment>
<comment type="interaction">
    <interactant intactId="EBI-10694905">
        <id>Q5BJH2-2</id>
    </interactant>
    <interactant intactId="EBI-525714">
        <id>P25942</id>
        <label>CD40</label>
    </interactant>
    <organismsDiffer>false</organismsDiffer>
    <experiments>3</experiments>
</comment>
<comment type="interaction">
    <interactant intactId="EBI-10694905">
        <id>Q5BJH2-2</id>
    </interactant>
    <interactant intactId="EBI-6657396">
        <id>P19397</id>
        <label>CD53</label>
    </interactant>
    <organismsDiffer>false</organismsDiffer>
    <experiments>3</experiments>
</comment>
<comment type="interaction">
    <interactant intactId="EBI-10694905">
        <id>Q5BJH2-2</id>
    </interactant>
    <interactant intactId="EBI-7797864">
        <id>P11912</id>
        <label>CD79A</label>
    </interactant>
    <organismsDiffer>false</organismsDiffer>
    <experiments>3</experiments>
</comment>
<comment type="interaction">
    <interactant intactId="EBI-10694905">
        <id>Q5BJH2-2</id>
    </interactant>
    <interactant intactId="EBI-18400628">
        <id>O00501</id>
        <label>CLDN5</label>
    </interactant>
    <organismsDiffer>false</organismsDiffer>
    <experiments>3</experiments>
</comment>
<comment type="interaction">
    <interactant intactId="EBI-10694905">
        <id>Q5BJH2-2</id>
    </interactant>
    <interactant intactId="EBI-740744">
        <id>O95471</id>
        <label>CLDN7</label>
    </interactant>
    <organismsDiffer>false</organismsDiffer>
    <experiments>3</experiments>
</comment>
<comment type="interaction">
    <interactant intactId="EBI-10694905">
        <id>Q5BJH2-2</id>
    </interactant>
    <interactant intactId="EBI-8646596">
        <id>P49447</id>
        <label>CYB561</label>
    </interactant>
    <organismsDiffer>false</organismsDiffer>
    <experiments>3</experiments>
</comment>
<comment type="interaction">
    <interactant intactId="EBI-10694905">
        <id>Q5BJH2-2</id>
    </interactant>
    <interactant intactId="EBI-2680384">
        <id>Q9BQA9</id>
        <label>CYBC1</label>
    </interactant>
    <organismsDiffer>false</organismsDiffer>
    <experiments>3</experiments>
</comment>
<comment type="interaction">
    <interactant intactId="EBI-10694905">
        <id>Q5BJH2-2</id>
    </interactant>
    <interactant intactId="EBI-18535450">
        <id>Q9GZR5</id>
        <label>ELOVL4</label>
    </interactant>
    <organismsDiffer>false</organismsDiffer>
    <experiments>3</experiments>
</comment>
<comment type="interaction">
    <interactant intactId="EBI-10694905">
        <id>Q5BJH2-2</id>
    </interactant>
    <interactant intactId="EBI-781551">
        <id>Q9Y282</id>
        <label>ERGIC3</label>
    </interactant>
    <organismsDiffer>false</organismsDiffer>
    <experiments>3</experiments>
</comment>
<comment type="interaction">
    <interactant intactId="EBI-10694905">
        <id>Q5BJH2-2</id>
    </interactant>
    <interactant intactId="EBI-18304435">
        <id>Q5JX71</id>
        <label>FAM209A</label>
    </interactant>
    <organismsDiffer>false</organismsDiffer>
    <experiments>3</experiments>
</comment>
<comment type="interaction">
    <interactant intactId="EBI-10694905">
        <id>Q5BJH2-2</id>
    </interactant>
    <interactant intactId="EBI-9304251">
        <id>Q05329</id>
        <label>GAD2</label>
    </interactant>
    <organismsDiffer>false</organismsDiffer>
    <experiments>3</experiments>
</comment>
<comment type="interaction">
    <interactant intactId="EBI-10694905">
        <id>Q5BJH2-2</id>
    </interactant>
    <interactant intactId="EBI-1103439">
        <id>P17302</id>
        <label>GJA1</label>
    </interactant>
    <organismsDiffer>false</organismsDiffer>
    <experiments>3</experiments>
</comment>
<comment type="interaction">
    <interactant intactId="EBI-10694905">
        <id>Q5BJH2-2</id>
    </interactant>
    <interactant intactId="EBI-17458373">
        <id>P48165</id>
        <label>GJA8</label>
    </interactant>
    <organismsDiffer>false</organismsDiffer>
    <experiments>3</experiments>
</comment>
<comment type="interaction">
    <interactant intactId="EBI-10694905">
        <id>Q5BJH2-2</id>
    </interactant>
    <interactant intactId="EBI-3909454">
        <id>O95377</id>
        <label>GJB5</label>
    </interactant>
    <organismsDiffer>false</organismsDiffer>
    <experiments>3</experiments>
</comment>
<comment type="interaction">
    <interactant intactId="EBI-10694905">
        <id>Q5BJH2-2</id>
    </interactant>
    <interactant intactId="EBI-3917143">
        <id>Q5T7V8</id>
        <label>GORAB</label>
    </interactant>
    <organismsDiffer>false</organismsDiffer>
    <experiments>3</experiments>
</comment>
<comment type="interaction">
    <interactant intactId="EBI-10694905">
        <id>Q5BJH2-2</id>
    </interactant>
    <interactant intactId="EBI-13345167">
        <id>Q8TDT2</id>
        <label>GPR152</label>
    </interactant>
    <organismsDiffer>false</organismsDiffer>
    <experiments>3</experiments>
</comment>
<comment type="interaction">
    <interactant intactId="EBI-10694905">
        <id>Q5BJH2-2</id>
    </interactant>
    <interactant intactId="EBI-11721746">
        <id>Q8TED1</id>
        <label>GPX8</label>
    </interactant>
    <organismsDiffer>false</organismsDiffer>
    <experiments>3</experiments>
</comment>
<comment type="interaction">
    <interactant intactId="EBI-10694905">
        <id>Q5BJH2-2</id>
    </interactant>
    <interactant intactId="EBI-401755">
        <id>P62993</id>
        <label>GRB2</label>
    </interactant>
    <organismsDiffer>false</organismsDiffer>
    <experiments>3</experiments>
</comment>
<comment type="interaction">
    <interactant intactId="EBI-10694905">
        <id>Q5BJH2-2</id>
    </interactant>
    <interactant intactId="EBI-1052304">
        <id>Q8NBQ5</id>
        <label>HSD17B11</label>
    </interactant>
    <organismsDiffer>false</organismsDiffer>
    <experiments>3</experiments>
</comment>
<comment type="interaction">
    <interactant intactId="EBI-10694905">
        <id>Q5BJH2-2</id>
    </interactant>
    <interactant intactId="EBI-725665">
        <id>Q9Y5U9</id>
        <label>IER3IP1</label>
    </interactant>
    <organismsDiffer>false</organismsDiffer>
    <experiments>3</experiments>
</comment>
<comment type="interaction">
    <interactant intactId="EBI-10694905">
        <id>Q5BJH2-2</id>
    </interactant>
    <interactant intactId="EBI-1757512">
        <id>P26951</id>
        <label>IL3RA</label>
    </interactant>
    <organismsDiffer>false</organismsDiffer>
    <experiments>3</experiments>
</comment>
<comment type="interaction">
    <interactant intactId="EBI-10694905">
        <id>Q5BJH2-2</id>
    </interactant>
    <interactant intactId="EBI-10266796">
        <id>Q8N5M9</id>
        <label>JAGN1</label>
    </interactant>
    <organismsDiffer>false</organismsDiffer>
    <experiments>3</experiments>
</comment>
<comment type="interaction">
    <interactant intactId="EBI-10694905">
        <id>Q5BJH2-2</id>
    </interactant>
    <interactant intactId="EBI-3934936">
        <id>O95279</id>
        <label>KCNK5</label>
    </interactant>
    <organismsDiffer>false</organismsDiffer>
    <experiments>3</experiments>
</comment>
<comment type="interaction">
    <interactant intactId="EBI-10694905">
        <id>Q5BJH2-2</id>
    </interactant>
    <interactant intactId="EBI-17490413">
        <id>A8MZ59</id>
        <label>LEUTX</label>
    </interactant>
    <organismsDiffer>false</organismsDiffer>
    <experiments>3</experiments>
</comment>
<comment type="interaction">
    <interactant intactId="EBI-10694905">
        <id>Q5BJH2-2</id>
    </interactant>
    <interactant intactId="EBI-17566767">
        <id>Q6ZUX7</id>
        <label>LHFPL2</label>
    </interactant>
    <organismsDiffer>false</organismsDiffer>
    <experiments>3</experiments>
</comment>
<comment type="interaction">
    <interactant intactId="EBI-10694905">
        <id>Q5BJH2-2</id>
    </interactant>
    <interactant intactId="EBI-2820517">
        <id>Q8TAF8</id>
        <label>LHFPL5</label>
    </interactant>
    <organismsDiffer>false</organismsDiffer>
    <experiments>3</experiments>
</comment>
<comment type="interaction">
    <interactant intactId="EBI-10694905">
        <id>Q5BJH2-2</id>
    </interactant>
    <interactant intactId="EBI-11956541">
        <id>Q9GZY8-5</id>
        <label>MFF</label>
    </interactant>
    <organismsDiffer>false</organismsDiffer>
    <experiments>3</experiments>
</comment>
<comment type="interaction">
    <interactant intactId="EBI-10694905">
        <id>Q5BJH2-2</id>
    </interactant>
    <interactant intactId="EBI-3920969">
        <id>Q6N075</id>
        <label>MFSD5</label>
    </interactant>
    <organismsDiffer>false</organismsDiffer>
    <experiments>3</experiments>
</comment>
<comment type="interaction">
    <interactant intactId="EBI-10694905">
        <id>Q5BJH2-2</id>
    </interactant>
    <interactant intactId="EBI-750085">
        <id>Q9Y676</id>
        <label>MRPS18B</label>
    </interactant>
    <organismsDiffer>false</organismsDiffer>
    <experiments>3</experiments>
</comment>
<comment type="interaction">
    <interactant intactId="EBI-10694905">
        <id>Q5BJH2-2</id>
    </interactant>
    <interactant intactId="EBI-2690033">
        <id>Q99551</id>
        <label>MTERF1</label>
    </interactant>
    <organismsDiffer>false</organismsDiffer>
    <experiments>3</experiments>
</comment>
<comment type="interaction">
    <interactant intactId="EBI-10694905">
        <id>Q5BJH2-2</id>
    </interactant>
    <interactant intactId="EBI-3923617">
        <id>Q9H2K0</id>
        <label>MTIF3</label>
    </interactant>
    <organismsDiffer>false</organismsDiffer>
    <experiments>3</experiments>
</comment>
<comment type="interaction">
    <interactant intactId="EBI-10694905">
        <id>Q5BJH2-2</id>
    </interactant>
    <interactant intactId="EBI-17263240">
        <id>P15941-11</id>
        <label>MUC1</label>
    </interactant>
    <organismsDiffer>false</organismsDiffer>
    <experiments>3</experiments>
</comment>
<comment type="interaction">
    <interactant intactId="EBI-10694905">
        <id>Q5BJH2-2</id>
    </interactant>
    <interactant intactId="EBI-7545592">
        <id>Q9H6H4</id>
        <label>REEP4</label>
    </interactant>
    <organismsDiffer>false</organismsDiffer>
    <experiments>3</experiments>
</comment>
<comment type="interaction">
    <interactant intactId="EBI-10694905">
        <id>Q5BJH2-2</id>
    </interactant>
    <interactant intactId="EBI-10192441">
        <id>Q86VR2</id>
        <label>RETREG3</label>
    </interactant>
    <organismsDiffer>false</organismsDiffer>
    <experiments>3</experiments>
</comment>
<comment type="interaction">
    <interactant intactId="EBI-10694905">
        <id>Q5BJH2-2</id>
    </interactant>
    <interactant intactId="EBI-17247926">
        <id>Q9NY72</id>
        <label>SCN3B</label>
    </interactant>
    <organismsDiffer>false</organismsDiffer>
    <experiments>3</experiments>
</comment>
<comment type="interaction">
    <interactant intactId="EBI-10694905">
        <id>Q5BJH2-2</id>
    </interactant>
    <interactant intactId="EBI-2855401">
        <id>Q9BY50</id>
        <label>SEC11C</label>
    </interactant>
    <organismsDiffer>false</organismsDiffer>
    <experiments>3</experiments>
</comment>
<comment type="interaction">
    <interactant intactId="EBI-10694905">
        <id>Q5BJH2-2</id>
    </interactant>
    <interactant intactId="EBI-18037857">
        <id>Q3SXP7</id>
        <label>SHISAL1</label>
    </interactant>
    <organismsDiffer>false</organismsDiffer>
    <experiments>3</experiments>
</comment>
<comment type="interaction">
    <interactant intactId="EBI-10694905">
        <id>Q5BJH2-2</id>
    </interactant>
    <interactant intactId="EBI-18159983">
        <id>Q3KNW5</id>
        <label>SLC10A6</label>
    </interactant>
    <organismsDiffer>false</organismsDiffer>
    <experiments>3</experiments>
</comment>
<comment type="interaction">
    <interactant intactId="EBI-10694905">
        <id>Q5BJH2-2</id>
    </interactant>
    <interactant intactId="EBI-17595455">
        <id>P54219-3</id>
        <label>SLC18A1</label>
    </interactant>
    <organismsDiffer>false</organismsDiffer>
    <experiments>3</experiments>
</comment>
<comment type="interaction">
    <interactant intactId="EBI-10694905">
        <id>Q5BJH2-2</id>
    </interactant>
    <interactant intactId="EBI-359038">
        <id>P43003</id>
        <label>SLC1A3</label>
    </interactant>
    <organismsDiffer>false</organismsDiffer>
    <experiments>3</experiments>
</comment>
<comment type="interaction">
    <interactant intactId="EBI-10694905">
        <id>Q5BJH2-2</id>
    </interactant>
    <interactant intactId="EBI-12814225">
        <id>Q9BXS9-3</id>
        <label>SLC26A6</label>
    </interactant>
    <organismsDiffer>false</organismsDiffer>
    <experiments>3</experiments>
</comment>
<comment type="interaction">
    <interactant intactId="EBI-10694905">
        <id>Q5BJH2-2</id>
    </interactant>
    <interactant intactId="EBI-12811757">
        <id>O95436-2</id>
        <label>SLC34A2</label>
    </interactant>
    <organismsDiffer>false</organismsDiffer>
    <experiments>3</experiments>
</comment>
<comment type="interaction">
    <interactant intactId="EBI-10694905">
        <id>Q5BJH2-2</id>
    </interactant>
    <interactant intactId="EBI-5235586">
        <id>Q8TBB6</id>
        <label>SLC7A14</label>
    </interactant>
    <organismsDiffer>false</organismsDiffer>
    <experiments>3</experiments>
</comment>
<comment type="interaction">
    <interactant intactId="EBI-10694905">
        <id>Q5BJH2-2</id>
    </interactant>
    <interactant intactId="EBI-17280858">
        <id>Q8WWF3</id>
        <label>SSMEM1</label>
    </interactant>
    <organismsDiffer>false</organismsDiffer>
    <experiments>3</experiments>
</comment>
<comment type="interaction">
    <interactant intactId="EBI-10694905">
        <id>Q5BJH2-2</id>
    </interactant>
    <interactant intactId="EBI-712466">
        <id>Q16623</id>
        <label>STX1A</label>
    </interactant>
    <organismsDiffer>false</organismsDiffer>
    <experiments>3</experiments>
</comment>
<comment type="interaction">
    <interactant intactId="EBI-10694905">
        <id>Q5BJH2-2</id>
    </interactant>
    <interactant intactId="EBI-3915978">
        <id>Q96A25</id>
        <label>TMEM106A</label>
    </interactant>
    <organismsDiffer>false</organismsDiffer>
    <experiments>3</experiments>
</comment>
<comment type="interaction">
    <interactant intactId="EBI-10694905">
        <id>Q5BJH2-2</id>
    </interactant>
    <interactant intactId="EBI-10982110">
        <id>Q96Q45-2</id>
        <label>TMEM237</label>
    </interactant>
    <organismsDiffer>false</organismsDiffer>
    <experiments>3</experiments>
</comment>
<comment type="interaction">
    <interactant intactId="EBI-10694905">
        <id>Q5BJH2-2</id>
    </interactant>
    <interactant intactId="EBI-3923061">
        <id>Q96B21</id>
        <label>TMEM45B</label>
    </interactant>
    <organismsDiffer>false</organismsDiffer>
    <experiments>3</experiments>
</comment>
<comment type="interaction">
    <interactant intactId="EBI-10694905">
        <id>Q5BJH2-2</id>
    </interactant>
    <interactant intactId="EBI-18178701">
        <id>Q4KMG9</id>
        <label>TMEM52B</label>
    </interactant>
    <organismsDiffer>false</organismsDiffer>
    <experiments>3</experiments>
</comment>
<comment type="interaction">
    <interactant intactId="EBI-10694905">
        <id>Q5BJH2-2</id>
    </interactant>
    <interactant intactId="EBI-11742770">
        <id>Q96HE8</id>
        <label>TMEM80</label>
    </interactant>
    <organismsDiffer>false</organismsDiffer>
    <experiments>3</experiments>
</comment>
<comment type="interaction">
    <interactant intactId="EBI-10694905">
        <id>Q5BJH2-2</id>
    </interactant>
    <interactant intactId="EBI-12345267">
        <id>O15393-2</id>
        <label>TMPRSS2</label>
    </interactant>
    <organismsDiffer>false</organismsDiffer>
    <experiments>3</experiments>
</comment>
<comment type="interaction">
    <interactant intactId="EBI-10694905">
        <id>Q5BJH2-2</id>
    </interactant>
    <interactant intactId="EBI-6447886">
        <id>Q9Y320</id>
        <label>TMX2</label>
    </interactant>
    <organismsDiffer>false</organismsDiffer>
    <experiments>3</experiments>
</comment>
<comment type="interaction">
    <interactant intactId="EBI-10694905">
        <id>Q5BJH2-2</id>
    </interactant>
    <interactant intactId="EBI-12837904">
        <id>Q96MV8</id>
        <label>ZDHHC15</label>
    </interactant>
    <organismsDiffer>false</organismsDiffer>
    <experiments>3</experiments>
</comment>
<comment type="interaction">
    <interactant intactId="EBI-10694905">
        <id>Q5BJH2-2</id>
    </interactant>
    <interactant intactId="EBI-3892947">
        <id>Q5T4F4</id>
        <label>ZFYVE27</label>
    </interactant>
    <organismsDiffer>false</organismsDiffer>
    <experiments>3</experiments>
</comment>
<comment type="subcellular location">
    <subcellularLocation>
        <location evidence="5">Membrane</location>
        <topology evidence="5">Multi-pass membrane protein</topology>
    </subcellularLocation>
</comment>
<comment type="alternative products">
    <event type="alternative splicing"/>
    <isoform>
        <id>Q5BJH2-1</id>
        <name>1</name>
        <sequence type="displayed"/>
    </isoform>
    <isoform>
        <id>Q5BJH2-2</id>
        <name>2</name>
        <sequence type="described" ref="VSP_021229"/>
    </isoform>
</comment>
<name>TM128_HUMAN</name>
<organism>
    <name type="scientific">Homo sapiens</name>
    <name type="common">Human</name>
    <dbReference type="NCBI Taxonomy" id="9606"/>
    <lineage>
        <taxon>Eukaryota</taxon>
        <taxon>Metazoa</taxon>
        <taxon>Chordata</taxon>
        <taxon>Craniata</taxon>
        <taxon>Vertebrata</taxon>
        <taxon>Euteleostomi</taxon>
        <taxon>Mammalia</taxon>
        <taxon>Eutheria</taxon>
        <taxon>Euarchontoglires</taxon>
        <taxon>Primates</taxon>
        <taxon>Haplorrhini</taxon>
        <taxon>Catarrhini</taxon>
        <taxon>Hominidae</taxon>
        <taxon>Homo</taxon>
    </lineage>
</organism>
<gene>
    <name type="primary">TMEM128</name>
</gene>
<reference key="1">
    <citation type="journal article" date="2004" name="Nat. Genet.">
        <title>Complete sequencing and characterization of 21,243 full-length human cDNAs.</title>
        <authorList>
            <person name="Ota T."/>
            <person name="Suzuki Y."/>
            <person name="Nishikawa T."/>
            <person name="Otsuki T."/>
            <person name="Sugiyama T."/>
            <person name="Irie R."/>
            <person name="Wakamatsu A."/>
            <person name="Hayashi K."/>
            <person name="Sato H."/>
            <person name="Nagai K."/>
            <person name="Kimura K."/>
            <person name="Makita H."/>
            <person name="Sekine M."/>
            <person name="Obayashi M."/>
            <person name="Nishi T."/>
            <person name="Shibahara T."/>
            <person name="Tanaka T."/>
            <person name="Ishii S."/>
            <person name="Yamamoto J."/>
            <person name="Saito K."/>
            <person name="Kawai Y."/>
            <person name="Isono Y."/>
            <person name="Nakamura Y."/>
            <person name="Nagahari K."/>
            <person name="Murakami K."/>
            <person name="Yasuda T."/>
            <person name="Iwayanagi T."/>
            <person name="Wagatsuma M."/>
            <person name="Shiratori A."/>
            <person name="Sudo H."/>
            <person name="Hosoiri T."/>
            <person name="Kaku Y."/>
            <person name="Kodaira H."/>
            <person name="Kondo H."/>
            <person name="Sugawara M."/>
            <person name="Takahashi M."/>
            <person name="Kanda K."/>
            <person name="Yokoi T."/>
            <person name="Furuya T."/>
            <person name="Kikkawa E."/>
            <person name="Omura Y."/>
            <person name="Abe K."/>
            <person name="Kamihara K."/>
            <person name="Katsuta N."/>
            <person name="Sato K."/>
            <person name="Tanikawa M."/>
            <person name="Yamazaki M."/>
            <person name="Ninomiya K."/>
            <person name="Ishibashi T."/>
            <person name="Yamashita H."/>
            <person name="Murakawa K."/>
            <person name="Fujimori K."/>
            <person name="Tanai H."/>
            <person name="Kimata M."/>
            <person name="Watanabe M."/>
            <person name="Hiraoka S."/>
            <person name="Chiba Y."/>
            <person name="Ishida S."/>
            <person name="Ono Y."/>
            <person name="Takiguchi S."/>
            <person name="Watanabe S."/>
            <person name="Yosida M."/>
            <person name="Hotuta T."/>
            <person name="Kusano J."/>
            <person name="Kanehori K."/>
            <person name="Takahashi-Fujii A."/>
            <person name="Hara H."/>
            <person name="Tanase T.-O."/>
            <person name="Nomura Y."/>
            <person name="Togiya S."/>
            <person name="Komai F."/>
            <person name="Hara R."/>
            <person name="Takeuchi K."/>
            <person name="Arita M."/>
            <person name="Imose N."/>
            <person name="Musashino K."/>
            <person name="Yuuki H."/>
            <person name="Oshima A."/>
            <person name="Sasaki N."/>
            <person name="Aotsuka S."/>
            <person name="Yoshikawa Y."/>
            <person name="Matsunawa H."/>
            <person name="Ichihara T."/>
            <person name="Shiohata N."/>
            <person name="Sano S."/>
            <person name="Moriya S."/>
            <person name="Momiyama H."/>
            <person name="Satoh N."/>
            <person name="Takami S."/>
            <person name="Terashima Y."/>
            <person name="Suzuki O."/>
            <person name="Nakagawa S."/>
            <person name="Senoh A."/>
            <person name="Mizoguchi H."/>
            <person name="Goto Y."/>
            <person name="Shimizu F."/>
            <person name="Wakebe H."/>
            <person name="Hishigaki H."/>
            <person name="Watanabe T."/>
            <person name="Sugiyama A."/>
            <person name="Takemoto M."/>
            <person name="Kawakami B."/>
            <person name="Yamazaki M."/>
            <person name="Watanabe K."/>
            <person name="Kumagai A."/>
            <person name="Itakura S."/>
            <person name="Fukuzumi Y."/>
            <person name="Fujimori Y."/>
            <person name="Komiyama M."/>
            <person name="Tashiro H."/>
            <person name="Tanigami A."/>
            <person name="Fujiwara T."/>
            <person name="Ono T."/>
            <person name="Yamada K."/>
            <person name="Fujii Y."/>
            <person name="Ozaki K."/>
            <person name="Hirao M."/>
            <person name="Ohmori Y."/>
            <person name="Kawabata A."/>
            <person name="Hikiji T."/>
            <person name="Kobatake N."/>
            <person name="Inagaki H."/>
            <person name="Ikema Y."/>
            <person name="Okamoto S."/>
            <person name="Okitani R."/>
            <person name="Kawakami T."/>
            <person name="Noguchi S."/>
            <person name="Itoh T."/>
            <person name="Shigeta K."/>
            <person name="Senba T."/>
            <person name="Matsumura K."/>
            <person name="Nakajima Y."/>
            <person name="Mizuno T."/>
            <person name="Morinaga M."/>
            <person name="Sasaki M."/>
            <person name="Togashi T."/>
            <person name="Oyama M."/>
            <person name="Hata H."/>
            <person name="Watanabe M."/>
            <person name="Komatsu T."/>
            <person name="Mizushima-Sugano J."/>
            <person name="Satoh T."/>
            <person name="Shirai Y."/>
            <person name="Takahashi Y."/>
            <person name="Nakagawa K."/>
            <person name="Okumura K."/>
            <person name="Nagase T."/>
            <person name="Nomura N."/>
            <person name="Kikuchi H."/>
            <person name="Masuho Y."/>
            <person name="Yamashita R."/>
            <person name="Nakai K."/>
            <person name="Yada T."/>
            <person name="Nakamura Y."/>
            <person name="Ohara O."/>
            <person name="Isogai T."/>
            <person name="Sugano S."/>
        </authorList>
    </citation>
    <scope>NUCLEOTIDE SEQUENCE [LARGE SCALE MRNA] (ISOFORM 1)</scope>
    <scope>VARIANT ILE-16</scope>
    <source>
        <tissue>Caudate nucleus</tissue>
    </source>
</reference>
<reference key="2">
    <citation type="journal article" date="2007" name="BMC Genomics">
        <title>The full-ORF clone resource of the German cDNA consortium.</title>
        <authorList>
            <person name="Bechtel S."/>
            <person name="Rosenfelder H."/>
            <person name="Duda A."/>
            <person name="Schmidt C.P."/>
            <person name="Ernst U."/>
            <person name="Wellenreuther R."/>
            <person name="Mehrle A."/>
            <person name="Schuster C."/>
            <person name="Bahr A."/>
            <person name="Bloecker H."/>
            <person name="Heubner D."/>
            <person name="Hoerlein A."/>
            <person name="Michel G."/>
            <person name="Wedler H."/>
            <person name="Koehrer K."/>
            <person name="Ottenwaelder B."/>
            <person name="Poustka A."/>
            <person name="Wiemann S."/>
            <person name="Schupp I."/>
        </authorList>
    </citation>
    <scope>NUCLEOTIDE SEQUENCE [LARGE SCALE MRNA] (ISOFORM 1)</scope>
    <source>
        <tissue>Amygdala</tissue>
    </source>
</reference>
<reference key="3">
    <citation type="journal article" date="2005" name="Nature">
        <title>Generation and annotation of the DNA sequences of human chromosomes 2 and 4.</title>
        <authorList>
            <person name="Hillier L.W."/>
            <person name="Graves T.A."/>
            <person name="Fulton R.S."/>
            <person name="Fulton L.A."/>
            <person name="Pepin K.H."/>
            <person name="Minx P."/>
            <person name="Wagner-McPherson C."/>
            <person name="Layman D."/>
            <person name="Wylie K."/>
            <person name="Sekhon M."/>
            <person name="Becker M.C."/>
            <person name="Fewell G.A."/>
            <person name="Delehaunty K.D."/>
            <person name="Miner T.L."/>
            <person name="Nash W.E."/>
            <person name="Kremitzki C."/>
            <person name="Oddy L."/>
            <person name="Du H."/>
            <person name="Sun H."/>
            <person name="Bradshaw-Cordum H."/>
            <person name="Ali J."/>
            <person name="Carter J."/>
            <person name="Cordes M."/>
            <person name="Harris A."/>
            <person name="Isak A."/>
            <person name="van Brunt A."/>
            <person name="Nguyen C."/>
            <person name="Du F."/>
            <person name="Courtney L."/>
            <person name="Kalicki J."/>
            <person name="Ozersky P."/>
            <person name="Abbott S."/>
            <person name="Armstrong J."/>
            <person name="Belter E.A."/>
            <person name="Caruso L."/>
            <person name="Cedroni M."/>
            <person name="Cotton M."/>
            <person name="Davidson T."/>
            <person name="Desai A."/>
            <person name="Elliott G."/>
            <person name="Erb T."/>
            <person name="Fronick C."/>
            <person name="Gaige T."/>
            <person name="Haakenson W."/>
            <person name="Haglund K."/>
            <person name="Holmes A."/>
            <person name="Harkins R."/>
            <person name="Kim K."/>
            <person name="Kruchowski S.S."/>
            <person name="Strong C.M."/>
            <person name="Grewal N."/>
            <person name="Goyea E."/>
            <person name="Hou S."/>
            <person name="Levy A."/>
            <person name="Martinka S."/>
            <person name="Mead K."/>
            <person name="McLellan M.D."/>
            <person name="Meyer R."/>
            <person name="Randall-Maher J."/>
            <person name="Tomlinson C."/>
            <person name="Dauphin-Kohlberg S."/>
            <person name="Kozlowicz-Reilly A."/>
            <person name="Shah N."/>
            <person name="Swearengen-Shahid S."/>
            <person name="Snider J."/>
            <person name="Strong J.T."/>
            <person name="Thompson J."/>
            <person name="Yoakum M."/>
            <person name="Leonard S."/>
            <person name="Pearman C."/>
            <person name="Trani L."/>
            <person name="Radionenko M."/>
            <person name="Waligorski J.E."/>
            <person name="Wang C."/>
            <person name="Rock S.M."/>
            <person name="Tin-Wollam A.-M."/>
            <person name="Maupin R."/>
            <person name="Latreille P."/>
            <person name="Wendl M.C."/>
            <person name="Yang S.-P."/>
            <person name="Pohl C."/>
            <person name="Wallis J.W."/>
            <person name="Spieth J."/>
            <person name="Bieri T.A."/>
            <person name="Berkowicz N."/>
            <person name="Nelson J.O."/>
            <person name="Osborne J."/>
            <person name="Ding L."/>
            <person name="Meyer R."/>
            <person name="Sabo A."/>
            <person name="Shotland Y."/>
            <person name="Sinha P."/>
            <person name="Wohldmann P.E."/>
            <person name="Cook L.L."/>
            <person name="Hickenbotham M.T."/>
            <person name="Eldred J."/>
            <person name="Williams D."/>
            <person name="Jones T.A."/>
            <person name="She X."/>
            <person name="Ciccarelli F.D."/>
            <person name="Izaurralde E."/>
            <person name="Taylor J."/>
            <person name="Schmutz J."/>
            <person name="Myers R.M."/>
            <person name="Cox D.R."/>
            <person name="Huang X."/>
            <person name="McPherson J.D."/>
            <person name="Mardis E.R."/>
            <person name="Clifton S.W."/>
            <person name="Warren W.C."/>
            <person name="Chinwalla A.T."/>
            <person name="Eddy S.R."/>
            <person name="Marra M.A."/>
            <person name="Ovcharenko I."/>
            <person name="Furey T.S."/>
            <person name="Miller W."/>
            <person name="Eichler E.E."/>
            <person name="Bork P."/>
            <person name="Suyama M."/>
            <person name="Torrents D."/>
            <person name="Waterston R.H."/>
            <person name="Wilson R.K."/>
        </authorList>
    </citation>
    <scope>NUCLEOTIDE SEQUENCE [LARGE SCALE GENOMIC DNA]</scope>
</reference>
<reference key="4">
    <citation type="submission" date="2005-09" db="EMBL/GenBank/DDBJ databases">
        <authorList>
            <person name="Mural R.J."/>
            <person name="Istrail S."/>
            <person name="Sutton G.G."/>
            <person name="Florea L."/>
            <person name="Halpern A.L."/>
            <person name="Mobarry C.M."/>
            <person name="Lippert R."/>
            <person name="Walenz B."/>
            <person name="Shatkay H."/>
            <person name="Dew I."/>
            <person name="Miller J.R."/>
            <person name="Flanigan M.J."/>
            <person name="Edwards N.J."/>
            <person name="Bolanos R."/>
            <person name="Fasulo D."/>
            <person name="Halldorsson B.V."/>
            <person name="Hannenhalli S."/>
            <person name="Turner R."/>
            <person name="Yooseph S."/>
            <person name="Lu F."/>
            <person name="Nusskern D.R."/>
            <person name="Shue B.C."/>
            <person name="Zheng X.H."/>
            <person name="Zhong F."/>
            <person name="Delcher A.L."/>
            <person name="Huson D.H."/>
            <person name="Kravitz S.A."/>
            <person name="Mouchard L."/>
            <person name="Reinert K."/>
            <person name="Remington K.A."/>
            <person name="Clark A.G."/>
            <person name="Waterman M.S."/>
            <person name="Eichler E.E."/>
            <person name="Adams M.D."/>
            <person name="Hunkapiller M.W."/>
            <person name="Myers E.W."/>
            <person name="Venter J.C."/>
        </authorList>
    </citation>
    <scope>NUCLEOTIDE SEQUENCE [LARGE SCALE GENOMIC DNA]</scope>
</reference>
<reference key="5">
    <citation type="journal article" date="2004" name="Genome Res.">
        <title>The status, quality, and expansion of the NIH full-length cDNA project: the Mammalian Gene Collection (MGC).</title>
        <authorList>
            <consortium name="The MGC Project Team"/>
        </authorList>
    </citation>
    <scope>NUCLEOTIDE SEQUENCE [LARGE SCALE MRNA] (ISOFORMS 1 AND 2)</scope>
    <scope>VARIANT ILE-16</scope>
    <source>
        <tissue>Placenta</tissue>
        <tissue>Uterus</tissue>
    </source>
</reference>
<accession>Q5BJH2</accession>
<accession>B4DHS7</accession>
<accession>D3DVS1</accession>
<accession>D3DVS3</accession>
<accession>Q5H9U6</accession>
<accession>Q96I94</accession>